<feature type="chain" id="PRO_0000208788" description="Putative transport protein YbjL">
    <location>
        <begin position="1"/>
        <end position="561"/>
    </location>
</feature>
<feature type="transmembrane region" description="Helical" evidence="1">
    <location>
        <begin position="8"/>
        <end position="28"/>
    </location>
</feature>
<feature type="transmembrane region" description="Helical" evidence="1">
    <location>
        <begin position="32"/>
        <end position="52"/>
    </location>
</feature>
<feature type="transmembrane region" description="Helical" evidence="1">
    <location>
        <begin position="66"/>
        <end position="86"/>
    </location>
</feature>
<feature type="transmembrane region" description="Helical" evidence="1">
    <location>
        <begin position="94"/>
        <end position="114"/>
    </location>
</feature>
<feature type="transmembrane region" description="Helical" evidence="1">
    <location>
        <begin position="158"/>
        <end position="178"/>
    </location>
</feature>
<feature type="transmembrane region" description="Helical" evidence="1">
    <location>
        <begin position="383"/>
        <end position="403"/>
    </location>
</feature>
<feature type="transmembrane region" description="Helical" evidence="1">
    <location>
        <begin position="406"/>
        <end position="426"/>
    </location>
</feature>
<feature type="transmembrane region" description="Helical" evidence="1">
    <location>
        <begin position="447"/>
        <end position="467"/>
    </location>
</feature>
<feature type="transmembrane region" description="Helical" evidence="1">
    <location>
        <begin position="475"/>
        <end position="495"/>
    </location>
</feature>
<feature type="transmembrane region" description="Helical" evidence="1">
    <location>
        <begin position="540"/>
        <end position="560"/>
    </location>
</feature>
<feature type="domain" description="RCK C-terminal 1" evidence="1">
    <location>
        <begin position="200"/>
        <end position="288"/>
    </location>
</feature>
<feature type="domain" description="RCK C-terminal 2" evidence="1">
    <location>
        <begin position="292"/>
        <end position="373"/>
    </location>
</feature>
<keyword id="KW-1003">Cell membrane</keyword>
<keyword id="KW-0472">Membrane</keyword>
<keyword id="KW-0677">Repeat</keyword>
<keyword id="KW-0812">Transmembrane</keyword>
<keyword id="KW-1133">Transmembrane helix</keyword>
<keyword id="KW-0813">Transport</keyword>
<protein>
    <recommendedName>
        <fullName evidence="1">Putative transport protein YbjL</fullName>
    </recommendedName>
</protein>
<accession>Q8Z851</accession>
<organism>
    <name type="scientific">Salmonella typhi</name>
    <dbReference type="NCBI Taxonomy" id="90370"/>
    <lineage>
        <taxon>Bacteria</taxon>
        <taxon>Pseudomonadati</taxon>
        <taxon>Pseudomonadota</taxon>
        <taxon>Gammaproteobacteria</taxon>
        <taxon>Enterobacterales</taxon>
        <taxon>Enterobacteriaceae</taxon>
        <taxon>Salmonella</taxon>
    </lineage>
</organism>
<sequence>MNINVADLLNGNYILLLFVVLALGLCLGKLRLGSVQLGNSIGVLVVSLLLGQQHFSINTDALNLGFMLFIFCVGVEAGPNFFSIFFRDGKNYLMLALVMVGSALLIALGLGKLFGWDIGLTAGMLAGSMTSTPVLVGAGDTLRHSGIASTQLSSALDNLSLGYALTYLIGLVSLIVGARYLPKLQHQDLQTSAQQIARERGLDTDANRKVYLPVIRAYRVGPELVAWTDGKNLRELGIYRQTGCYIERIRRNGILANPDGDAVLQMGDEIALVGYPDAHARLDPSFRNGKEVFDRDLLDMRIVTEEIVVKNHNAVGRRLAQLKLTDHGCFLNRVIRSQIEMPIDDNVVLNKGDVLQVSGDARRVKTIADRIGFISIHSQVTDLLAFCAFFIIGLMIGMITFQFRNFSFGIGNAAGLLFAGIMLGFLRANHPTFGYIPQGALNMVKEFGLMVFMAGVGLSAGSGISNGLGAVGGQMLIAGLVVSLIPVVICFLFGAYVLRMNRALLFGAMMGARTCAPAMEIISDTARSNIPALGYAGTYAIANVLLTLAGTLIVIIWPGLG</sequence>
<reference key="1">
    <citation type="journal article" date="2001" name="Nature">
        <title>Complete genome sequence of a multiple drug resistant Salmonella enterica serovar Typhi CT18.</title>
        <authorList>
            <person name="Parkhill J."/>
            <person name="Dougan G."/>
            <person name="James K.D."/>
            <person name="Thomson N.R."/>
            <person name="Pickard D."/>
            <person name="Wain J."/>
            <person name="Churcher C.M."/>
            <person name="Mungall K.L."/>
            <person name="Bentley S.D."/>
            <person name="Holden M.T.G."/>
            <person name="Sebaihia M."/>
            <person name="Baker S."/>
            <person name="Basham D."/>
            <person name="Brooks K."/>
            <person name="Chillingworth T."/>
            <person name="Connerton P."/>
            <person name="Cronin A."/>
            <person name="Davis P."/>
            <person name="Davies R.M."/>
            <person name="Dowd L."/>
            <person name="White N."/>
            <person name="Farrar J."/>
            <person name="Feltwell T."/>
            <person name="Hamlin N."/>
            <person name="Haque A."/>
            <person name="Hien T.T."/>
            <person name="Holroyd S."/>
            <person name="Jagels K."/>
            <person name="Krogh A."/>
            <person name="Larsen T.S."/>
            <person name="Leather S."/>
            <person name="Moule S."/>
            <person name="O'Gaora P."/>
            <person name="Parry C."/>
            <person name="Quail M.A."/>
            <person name="Rutherford K.M."/>
            <person name="Simmonds M."/>
            <person name="Skelton J."/>
            <person name="Stevens K."/>
            <person name="Whitehead S."/>
            <person name="Barrell B.G."/>
        </authorList>
    </citation>
    <scope>NUCLEOTIDE SEQUENCE [LARGE SCALE GENOMIC DNA]</scope>
    <source>
        <strain>CT18</strain>
    </source>
</reference>
<reference key="2">
    <citation type="journal article" date="2003" name="J. Bacteriol.">
        <title>Comparative genomics of Salmonella enterica serovar Typhi strains Ty2 and CT18.</title>
        <authorList>
            <person name="Deng W."/>
            <person name="Liou S.-R."/>
            <person name="Plunkett G. III"/>
            <person name="Mayhew G.F."/>
            <person name="Rose D.J."/>
            <person name="Burland V."/>
            <person name="Kodoyianni V."/>
            <person name="Schwartz D.C."/>
            <person name="Blattner F.R."/>
        </authorList>
    </citation>
    <scope>NUCLEOTIDE SEQUENCE [LARGE SCALE GENOMIC DNA]</scope>
    <source>
        <strain>ATCC 700931 / Ty2</strain>
    </source>
</reference>
<comment type="subcellular location">
    <subcellularLocation>
        <location evidence="1">Cell membrane</location>
        <topology evidence="1">Multi-pass membrane protein</topology>
    </subcellularLocation>
</comment>
<comment type="similarity">
    <text evidence="1">Belongs to the AAE transporter (TC 2.A.81) family. YbjL subfamily.</text>
</comment>
<evidence type="ECO:0000255" key="1">
    <source>
        <dbReference type="HAMAP-Rule" id="MF_01015"/>
    </source>
</evidence>
<name>YBJL_SALTI</name>
<proteinExistence type="inferred from homology"/>
<gene>
    <name evidence="1" type="primary">ybjL</name>
    <name type="ordered locus">STY0903</name>
    <name type="ordered locus">t2026</name>
</gene>
<dbReference type="EMBL" id="AL513382">
    <property type="protein sequence ID" value="CAD05309.1"/>
    <property type="molecule type" value="Genomic_DNA"/>
</dbReference>
<dbReference type="EMBL" id="AE014613">
    <property type="protein sequence ID" value="AAO69638.1"/>
    <property type="molecule type" value="Genomic_DNA"/>
</dbReference>
<dbReference type="RefSeq" id="NP_455397.1">
    <property type="nucleotide sequence ID" value="NC_003198.1"/>
</dbReference>
<dbReference type="RefSeq" id="WP_001024851.1">
    <property type="nucleotide sequence ID" value="NZ_WSUR01000019.1"/>
</dbReference>
<dbReference type="SMR" id="Q8Z851"/>
<dbReference type="STRING" id="220341.gene:17584899"/>
<dbReference type="KEGG" id="stt:t2026"/>
<dbReference type="KEGG" id="sty:STY0903"/>
<dbReference type="PATRIC" id="fig|220341.7.peg.912"/>
<dbReference type="eggNOG" id="COG0569">
    <property type="taxonomic scope" value="Bacteria"/>
</dbReference>
<dbReference type="eggNOG" id="COG2985">
    <property type="taxonomic scope" value="Bacteria"/>
</dbReference>
<dbReference type="HOGENOM" id="CLU_035023_2_2_6"/>
<dbReference type="OMA" id="IHSQMAD"/>
<dbReference type="OrthoDB" id="5166626at2"/>
<dbReference type="Proteomes" id="UP000000541">
    <property type="component" value="Chromosome"/>
</dbReference>
<dbReference type="Proteomes" id="UP000002670">
    <property type="component" value="Chromosome"/>
</dbReference>
<dbReference type="GO" id="GO:0005886">
    <property type="term" value="C:plasma membrane"/>
    <property type="evidence" value="ECO:0007669"/>
    <property type="project" value="UniProtKB-SubCell"/>
</dbReference>
<dbReference type="GO" id="GO:0008324">
    <property type="term" value="F:monoatomic cation transmembrane transporter activity"/>
    <property type="evidence" value="ECO:0007669"/>
    <property type="project" value="InterPro"/>
</dbReference>
<dbReference type="GO" id="GO:0006813">
    <property type="term" value="P:potassium ion transport"/>
    <property type="evidence" value="ECO:0007669"/>
    <property type="project" value="InterPro"/>
</dbReference>
<dbReference type="FunFam" id="3.30.70.1450:FF:000003">
    <property type="entry name" value="Putative transport protein YbjL"/>
    <property type="match status" value="1"/>
</dbReference>
<dbReference type="Gene3D" id="3.30.70.1450">
    <property type="entry name" value="Regulator of K+ conductance, C-terminal domain"/>
    <property type="match status" value="1"/>
</dbReference>
<dbReference type="HAMAP" id="MF_01015">
    <property type="entry name" value="YbjL"/>
    <property type="match status" value="1"/>
</dbReference>
<dbReference type="InterPro" id="IPR050144">
    <property type="entry name" value="AAE_transporter"/>
</dbReference>
<dbReference type="InterPro" id="IPR006037">
    <property type="entry name" value="RCK_C"/>
</dbReference>
<dbReference type="InterPro" id="IPR036721">
    <property type="entry name" value="RCK_C_sf"/>
</dbReference>
<dbReference type="InterPro" id="IPR023017">
    <property type="entry name" value="Transp_YbjL_put"/>
</dbReference>
<dbReference type="InterPro" id="IPR006512">
    <property type="entry name" value="YidE_YbjL"/>
</dbReference>
<dbReference type="NCBIfam" id="NF003440">
    <property type="entry name" value="PRK04972.1"/>
    <property type="match status" value="1"/>
</dbReference>
<dbReference type="NCBIfam" id="TIGR01625">
    <property type="entry name" value="YidE_YbjL_dupl"/>
    <property type="match status" value="2"/>
</dbReference>
<dbReference type="PANTHER" id="PTHR30445">
    <property type="entry name" value="K(+)_H(+) ANTIPORTER SUBUNIT KHTT"/>
    <property type="match status" value="1"/>
</dbReference>
<dbReference type="PANTHER" id="PTHR30445:SF10">
    <property type="entry name" value="TRANSPORT PROTEIN YBJL-RELATED"/>
    <property type="match status" value="1"/>
</dbReference>
<dbReference type="Pfam" id="PF06826">
    <property type="entry name" value="Asp-Al_Ex"/>
    <property type="match status" value="2"/>
</dbReference>
<dbReference type="Pfam" id="PF02080">
    <property type="entry name" value="TrkA_C"/>
    <property type="match status" value="2"/>
</dbReference>
<dbReference type="SUPFAM" id="SSF116726">
    <property type="entry name" value="TrkA C-terminal domain-like"/>
    <property type="match status" value="2"/>
</dbReference>
<dbReference type="PROSITE" id="PS51202">
    <property type="entry name" value="RCK_C"/>
    <property type="match status" value="2"/>
</dbReference>